<evidence type="ECO:0000250" key="1"/>
<evidence type="ECO:0000269" key="2">
    <source>
    </source>
</evidence>
<evidence type="ECO:0000305" key="3"/>
<accession>Q9Y813</accession>
<organism>
    <name type="scientific">Schizosaccharomyces pombe (strain 972 / ATCC 24843)</name>
    <name type="common">Fission yeast</name>
    <dbReference type="NCBI Taxonomy" id="284812"/>
    <lineage>
        <taxon>Eukaryota</taxon>
        <taxon>Fungi</taxon>
        <taxon>Dikarya</taxon>
        <taxon>Ascomycota</taxon>
        <taxon>Taphrinomycotina</taxon>
        <taxon>Schizosaccharomycetes</taxon>
        <taxon>Schizosaccharomycetales</taxon>
        <taxon>Schizosaccharomycetaceae</taxon>
        <taxon>Schizosaccharomyces</taxon>
    </lineage>
</organism>
<comment type="function">
    <text evidence="1">Component of ribonuclease P, a protein complex that generates mature tRNA molecules by cleaving their 5'-ends.</text>
</comment>
<comment type="catalytic activity">
    <reaction>
        <text>Endonucleolytic cleavage of RNA, removing 5'-extranucleotides from tRNA precursor.</text>
        <dbReference type="EC" id="3.1.26.5"/>
    </reaction>
</comment>
<comment type="cofactor">
    <cofactor evidence="1">
        <name>Zn(2+)</name>
        <dbReference type="ChEBI" id="CHEBI:29105"/>
    </cofactor>
    <text evidence="1">Binds 1 zinc ion per subunit.</text>
</comment>
<comment type="subcellular location">
    <subcellularLocation>
        <location evidence="2">Cytoplasm</location>
    </subcellularLocation>
    <subcellularLocation>
        <location evidence="2">Nucleus</location>
    </subcellularLocation>
</comment>
<comment type="similarity">
    <text evidence="3">Belongs to the eukaryotic/archaeal RNase P protein component 4 family.</text>
</comment>
<name>RPR2_SCHPO</name>
<protein>
    <recommendedName>
        <fullName>Ribonuclease P protein subunit rpr2</fullName>
        <ecNumber>3.1.26.5</ecNumber>
    </recommendedName>
    <alternativeName>
        <fullName>RNA-processing protein rpr2</fullName>
    </alternativeName>
</protein>
<gene>
    <name type="primary">rpr2</name>
    <name type="ORF">SPBC1105.16c</name>
</gene>
<feature type="chain" id="PRO_0000317087" description="Ribonuclease P protein subunit rpr2">
    <location>
        <begin position="1"/>
        <end position="107"/>
    </location>
</feature>
<feature type="binding site" evidence="1">
    <location>
        <position position="59"/>
    </location>
    <ligand>
        <name>Zn(2+)</name>
        <dbReference type="ChEBI" id="CHEBI:29105"/>
    </ligand>
</feature>
<feature type="binding site" evidence="1">
    <location>
        <position position="62"/>
    </location>
    <ligand>
        <name>Zn(2+)</name>
        <dbReference type="ChEBI" id="CHEBI:29105"/>
    </ligand>
</feature>
<feature type="binding site" evidence="1">
    <location>
        <position position="93"/>
    </location>
    <ligand>
        <name>Zn(2+)</name>
        <dbReference type="ChEBI" id="CHEBI:29105"/>
    </ligand>
</feature>
<feature type="binding site" evidence="1">
    <location>
        <position position="96"/>
    </location>
    <ligand>
        <name>Zn(2+)</name>
        <dbReference type="ChEBI" id="CHEBI:29105"/>
    </ligand>
</feature>
<dbReference type="EC" id="3.1.26.5"/>
<dbReference type="EMBL" id="CU329671">
    <property type="protein sequence ID" value="CAB50979.1"/>
    <property type="molecule type" value="Genomic_DNA"/>
</dbReference>
<dbReference type="PIR" id="T39293">
    <property type="entry name" value="T39293"/>
</dbReference>
<dbReference type="RefSeq" id="NP_596472.1">
    <property type="nucleotide sequence ID" value="NM_001022391.2"/>
</dbReference>
<dbReference type="SMR" id="Q9Y813"/>
<dbReference type="FunCoup" id="Q9Y813">
    <property type="interactions" value="2"/>
</dbReference>
<dbReference type="STRING" id="284812.Q9Y813"/>
<dbReference type="PaxDb" id="4896-SPBC1105.16c.1"/>
<dbReference type="EnsemblFungi" id="SPBC1105.16c.1">
    <property type="protein sequence ID" value="SPBC1105.16c.1:pep"/>
    <property type="gene ID" value="SPBC1105.16c"/>
</dbReference>
<dbReference type="GeneID" id="2539745"/>
<dbReference type="KEGG" id="spo:2539745"/>
<dbReference type="PomBase" id="SPBC1105.16c">
    <property type="gene designation" value="rpr2"/>
</dbReference>
<dbReference type="VEuPathDB" id="FungiDB:SPBC1105.16c"/>
<dbReference type="eggNOG" id="KOG4394">
    <property type="taxonomic scope" value="Eukaryota"/>
</dbReference>
<dbReference type="HOGENOM" id="CLU_079140_4_0_1"/>
<dbReference type="InParanoid" id="Q9Y813"/>
<dbReference type="OMA" id="DPKHLLW"/>
<dbReference type="PhylomeDB" id="Q9Y813"/>
<dbReference type="PRO" id="PR:Q9Y813"/>
<dbReference type="Proteomes" id="UP000002485">
    <property type="component" value="Chromosome II"/>
</dbReference>
<dbReference type="GO" id="GO:0005829">
    <property type="term" value="C:cytosol"/>
    <property type="evidence" value="ECO:0007005"/>
    <property type="project" value="PomBase"/>
</dbReference>
<dbReference type="GO" id="GO:0005655">
    <property type="term" value="C:nucleolar ribonuclease P complex"/>
    <property type="evidence" value="ECO:0000318"/>
    <property type="project" value="GO_Central"/>
</dbReference>
<dbReference type="GO" id="GO:0005634">
    <property type="term" value="C:nucleus"/>
    <property type="evidence" value="ECO:0007005"/>
    <property type="project" value="PomBase"/>
</dbReference>
<dbReference type="GO" id="GO:0046872">
    <property type="term" value="F:metal ion binding"/>
    <property type="evidence" value="ECO:0007669"/>
    <property type="project" value="UniProtKB-KW"/>
</dbReference>
<dbReference type="GO" id="GO:0004526">
    <property type="term" value="F:ribonuclease P activity"/>
    <property type="evidence" value="ECO:0000266"/>
    <property type="project" value="PomBase"/>
</dbReference>
<dbReference type="GO" id="GO:0008033">
    <property type="term" value="P:tRNA processing"/>
    <property type="evidence" value="ECO:0000318"/>
    <property type="project" value="GO_Central"/>
</dbReference>
<dbReference type="Gene3D" id="6.20.50.20">
    <property type="match status" value="1"/>
</dbReference>
<dbReference type="InterPro" id="IPR007175">
    <property type="entry name" value="Rpr2/Snm1/Rpp21"/>
</dbReference>
<dbReference type="PANTHER" id="PTHR14742:SF0">
    <property type="entry name" value="RIBONUCLEASE P PROTEIN SUBUNIT P21"/>
    <property type="match status" value="1"/>
</dbReference>
<dbReference type="PANTHER" id="PTHR14742">
    <property type="entry name" value="RIBONUCLEASE P SUBUNIT P21"/>
    <property type="match status" value="1"/>
</dbReference>
<dbReference type="Pfam" id="PF04032">
    <property type="entry name" value="Rpr2"/>
    <property type="match status" value="1"/>
</dbReference>
<proteinExistence type="inferred from homology"/>
<sequence length="107" mass="12366">MSTKSKDQHARVSYLYQASQLLFRNVQEPTLSRHYISTAKDVSQKSVMRIHPDIKRTICKGCNSLLVPGKSCSIRFEEPSRKNPSIDRVLWICKKCAFKKRFSDKSC</sequence>
<keyword id="KW-0963">Cytoplasm</keyword>
<keyword id="KW-0378">Hydrolase</keyword>
<keyword id="KW-0479">Metal-binding</keyword>
<keyword id="KW-0539">Nucleus</keyword>
<keyword id="KW-1185">Reference proteome</keyword>
<keyword id="KW-0819">tRNA processing</keyword>
<keyword id="KW-0862">Zinc</keyword>
<reference key="1">
    <citation type="journal article" date="2002" name="Nature">
        <title>The genome sequence of Schizosaccharomyces pombe.</title>
        <authorList>
            <person name="Wood V."/>
            <person name="Gwilliam R."/>
            <person name="Rajandream M.A."/>
            <person name="Lyne M.H."/>
            <person name="Lyne R."/>
            <person name="Stewart A."/>
            <person name="Sgouros J.G."/>
            <person name="Peat N."/>
            <person name="Hayles J."/>
            <person name="Baker S.G."/>
            <person name="Basham D."/>
            <person name="Bowman S."/>
            <person name="Brooks K."/>
            <person name="Brown D."/>
            <person name="Brown S."/>
            <person name="Chillingworth T."/>
            <person name="Churcher C.M."/>
            <person name="Collins M."/>
            <person name="Connor R."/>
            <person name="Cronin A."/>
            <person name="Davis P."/>
            <person name="Feltwell T."/>
            <person name="Fraser A."/>
            <person name="Gentles S."/>
            <person name="Goble A."/>
            <person name="Hamlin N."/>
            <person name="Harris D.E."/>
            <person name="Hidalgo J."/>
            <person name="Hodgson G."/>
            <person name="Holroyd S."/>
            <person name="Hornsby T."/>
            <person name="Howarth S."/>
            <person name="Huckle E.J."/>
            <person name="Hunt S."/>
            <person name="Jagels K."/>
            <person name="James K.D."/>
            <person name="Jones L."/>
            <person name="Jones M."/>
            <person name="Leather S."/>
            <person name="McDonald S."/>
            <person name="McLean J."/>
            <person name="Mooney P."/>
            <person name="Moule S."/>
            <person name="Mungall K.L."/>
            <person name="Murphy L.D."/>
            <person name="Niblett D."/>
            <person name="Odell C."/>
            <person name="Oliver K."/>
            <person name="O'Neil S."/>
            <person name="Pearson D."/>
            <person name="Quail M.A."/>
            <person name="Rabbinowitsch E."/>
            <person name="Rutherford K.M."/>
            <person name="Rutter S."/>
            <person name="Saunders D."/>
            <person name="Seeger K."/>
            <person name="Sharp S."/>
            <person name="Skelton J."/>
            <person name="Simmonds M.N."/>
            <person name="Squares R."/>
            <person name="Squares S."/>
            <person name="Stevens K."/>
            <person name="Taylor K."/>
            <person name="Taylor R.G."/>
            <person name="Tivey A."/>
            <person name="Walsh S.V."/>
            <person name="Warren T."/>
            <person name="Whitehead S."/>
            <person name="Woodward J.R."/>
            <person name="Volckaert G."/>
            <person name="Aert R."/>
            <person name="Robben J."/>
            <person name="Grymonprez B."/>
            <person name="Weltjens I."/>
            <person name="Vanstreels E."/>
            <person name="Rieger M."/>
            <person name="Schaefer M."/>
            <person name="Mueller-Auer S."/>
            <person name="Gabel C."/>
            <person name="Fuchs M."/>
            <person name="Duesterhoeft A."/>
            <person name="Fritzc C."/>
            <person name="Holzer E."/>
            <person name="Moestl D."/>
            <person name="Hilbert H."/>
            <person name="Borzym K."/>
            <person name="Langer I."/>
            <person name="Beck A."/>
            <person name="Lehrach H."/>
            <person name="Reinhardt R."/>
            <person name="Pohl T.M."/>
            <person name="Eger P."/>
            <person name="Zimmermann W."/>
            <person name="Wedler H."/>
            <person name="Wambutt R."/>
            <person name="Purnelle B."/>
            <person name="Goffeau A."/>
            <person name="Cadieu E."/>
            <person name="Dreano S."/>
            <person name="Gloux S."/>
            <person name="Lelaure V."/>
            <person name="Mottier S."/>
            <person name="Galibert F."/>
            <person name="Aves S.J."/>
            <person name="Xiang Z."/>
            <person name="Hunt C."/>
            <person name="Moore K."/>
            <person name="Hurst S.M."/>
            <person name="Lucas M."/>
            <person name="Rochet M."/>
            <person name="Gaillardin C."/>
            <person name="Tallada V.A."/>
            <person name="Garzon A."/>
            <person name="Thode G."/>
            <person name="Daga R.R."/>
            <person name="Cruzado L."/>
            <person name="Jimenez J."/>
            <person name="Sanchez M."/>
            <person name="del Rey F."/>
            <person name="Benito J."/>
            <person name="Dominguez A."/>
            <person name="Revuelta J.L."/>
            <person name="Moreno S."/>
            <person name="Armstrong J."/>
            <person name="Forsburg S.L."/>
            <person name="Cerutti L."/>
            <person name="Lowe T."/>
            <person name="McCombie W.R."/>
            <person name="Paulsen I."/>
            <person name="Potashkin J."/>
            <person name="Shpakovski G.V."/>
            <person name="Ussery D."/>
            <person name="Barrell B.G."/>
            <person name="Nurse P."/>
        </authorList>
    </citation>
    <scope>NUCLEOTIDE SEQUENCE [LARGE SCALE GENOMIC DNA]</scope>
    <source>
        <strain>972 / ATCC 24843</strain>
    </source>
</reference>
<reference key="2">
    <citation type="journal article" date="2006" name="Nat. Biotechnol.">
        <title>ORFeome cloning and global analysis of protein localization in the fission yeast Schizosaccharomyces pombe.</title>
        <authorList>
            <person name="Matsuyama A."/>
            <person name="Arai R."/>
            <person name="Yashiroda Y."/>
            <person name="Shirai A."/>
            <person name="Kamata A."/>
            <person name="Sekido S."/>
            <person name="Kobayashi Y."/>
            <person name="Hashimoto A."/>
            <person name="Hamamoto M."/>
            <person name="Hiraoka Y."/>
            <person name="Horinouchi S."/>
            <person name="Yoshida M."/>
        </authorList>
    </citation>
    <scope>SUBCELLULAR LOCATION [LARGE SCALE ANALYSIS]</scope>
</reference>